<gene>
    <name type="ordered locus">Rru_A3615</name>
</gene>
<name>PDRP_RHORT</name>
<sequence>MSMQSHHVHLVSDATGETVSNVVRACLAQFEDVRVVQHRWWLLRSPSQVGRVIEGIQRDPGTVVFTVVDPEIRRALEEACRLINIPCVALLDPVMDALALVLETKGNQQPGRQYTLDEGYFSRIEAMHFALALDDGQSLDRLKQAEVVVVGVSRTSKTPTCMFLANKGIRAANVPLVPGIDPPAELMDLAGPLVVGLTRDPKSLSDMRRSRLRLMREDGDSPYAEEDSVAREVREARRLYARMGWTVIDVTRKSIEEVAATIMQKLGTAPWGEGL</sequence>
<feature type="chain" id="PRO_0000316729" description="Putative pyruvate, phosphate dikinase regulatory protein">
    <location>
        <begin position="1"/>
        <end position="275"/>
    </location>
</feature>
<feature type="binding site" evidence="1">
    <location>
        <begin position="151"/>
        <end position="158"/>
    </location>
    <ligand>
        <name>ADP</name>
        <dbReference type="ChEBI" id="CHEBI:456216"/>
    </ligand>
</feature>
<keyword id="KW-0418">Kinase</keyword>
<keyword id="KW-0547">Nucleotide-binding</keyword>
<keyword id="KW-1185">Reference proteome</keyword>
<keyword id="KW-0723">Serine/threonine-protein kinase</keyword>
<keyword id="KW-0808">Transferase</keyword>
<reference key="1">
    <citation type="journal article" date="2011" name="Stand. Genomic Sci.">
        <title>Complete genome sequence of Rhodospirillum rubrum type strain (S1).</title>
        <authorList>
            <person name="Munk A.C."/>
            <person name="Copeland A."/>
            <person name="Lucas S."/>
            <person name="Lapidus A."/>
            <person name="Del Rio T.G."/>
            <person name="Barry K."/>
            <person name="Detter J.C."/>
            <person name="Hammon N."/>
            <person name="Israni S."/>
            <person name="Pitluck S."/>
            <person name="Brettin T."/>
            <person name="Bruce D."/>
            <person name="Han C."/>
            <person name="Tapia R."/>
            <person name="Gilna P."/>
            <person name="Schmutz J."/>
            <person name="Larimer F."/>
            <person name="Land M."/>
            <person name="Kyrpides N.C."/>
            <person name="Mavromatis K."/>
            <person name="Richardson P."/>
            <person name="Rohde M."/>
            <person name="Goeker M."/>
            <person name="Klenk H.P."/>
            <person name="Zhang Y."/>
            <person name="Roberts G.P."/>
            <person name="Reslewic S."/>
            <person name="Schwartz D.C."/>
        </authorList>
    </citation>
    <scope>NUCLEOTIDE SEQUENCE [LARGE SCALE GENOMIC DNA]</scope>
    <source>
        <strain>ATCC 11170 / ATH 1.1.1 / DSM 467 / LMG 4362 / NCIMB 8255 / S1</strain>
    </source>
</reference>
<accession>Q2RN86</accession>
<organism>
    <name type="scientific">Rhodospirillum rubrum (strain ATCC 11170 / ATH 1.1.1 / DSM 467 / LMG 4362 / NCIMB 8255 / S1)</name>
    <dbReference type="NCBI Taxonomy" id="269796"/>
    <lineage>
        <taxon>Bacteria</taxon>
        <taxon>Pseudomonadati</taxon>
        <taxon>Pseudomonadota</taxon>
        <taxon>Alphaproteobacteria</taxon>
        <taxon>Rhodospirillales</taxon>
        <taxon>Rhodospirillaceae</taxon>
        <taxon>Rhodospirillum</taxon>
    </lineage>
</organism>
<evidence type="ECO:0000255" key="1">
    <source>
        <dbReference type="HAMAP-Rule" id="MF_00921"/>
    </source>
</evidence>
<proteinExistence type="inferred from homology"/>
<comment type="function">
    <text evidence="1">Bifunctional serine/threonine kinase and phosphorylase involved in the regulation of the pyruvate, phosphate dikinase (PPDK) by catalyzing its phosphorylation/dephosphorylation.</text>
</comment>
<comment type="catalytic activity">
    <reaction evidence="1">
        <text>N(tele)-phospho-L-histidyl/L-threonyl-[pyruvate, phosphate dikinase] + ADP = N(tele)-phospho-L-histidyl/O-phospho-L-threonyl-[pyruvate, phosphate dikinase] + AMP + H(+)</text>
        <dbReference type="Rhea" id="RHEA:43692"/>
        <dbReference type="Rhea" id="RHEA-COMP:10650"/>
        <dbReference type="Rhea" id="RHEA-COMP:10651"/>
        <dbReference type="ChEBI" id="CHEBI:15378"/>
        <dbReference type="ChEBI" id="CHEBI:30013"/>
        <dbReference type="ChEBI" id="CHEBI:61977"/>
        <dbReference type="ChEBI" id="CHEBI:83586"/>
        <dbReference type="ChEBI" id="CHEBI:456215"/>
        <dbReference type="ChEBI" id="CHEBI:456216"/>
        <dbReference type="EC" id="2.7.11.32"/>
    </reaction>
</comment>
<comment type="catalytic activity">
    <reaction evidence="1">
        <text>N(tele)-phospho-L-histidyl/O-phospho-L-threonyl-[pyruvate, phosphate dikinase] + phosphate + H(+) = N(tele)-phospho-L-histidyl/L-threonyl-[pyruvate, phosphate dikinase] + diphosphate</text>
        <dbReference type="Rhea" id="RHEA:43696"/>
        <dbReference type="Rhea" id="RHEA-COMP:10650"/>
        <dbReference type="Rhea" id="RHEA-COMP:10651"/>
        <dbReference type="ChEBI" id="CHEBI:15378"/>
        <dbReference type="ChEBI" id="CHEBI:30013"/>
        <dbReference type="ChEBI" id="CHEBI:33019"/>
        <dbReference type="ChEBI" id="CHEBI:43474"/>
        <dbReference type="ChEBI" id="CHEBI:61977"/>
        <dbReference type="ChEBI" id="CHEBI:83586"/>
        <dbReference type="EC" id="2.7.4.27"/>
    </reaction>
</comment>
<comment type="similarity">
    <text evidence="1">Belongs to the pyruvate, phosphate/water dikinase regulatory protein family. PDRP subfamily.</text>
</comment>
<dbReference type="EC" id="2.7.11.32" evidence="1"/>
<dbReference type="EC" id="2.7.4.27" evidence="1"/>
<dbReference type="EMBL" id="CP000230">
    <property type="protein sequence ID" value="ABC24409.1"/>
    <property type="molecule type" value="Genomic_DNA"/>
</dbReference>
<dbReference type="RefSeq" id="WP_011391362.1">
    <property type="nucleotide sequence ID" value="NC_007643.1"/>
</dbReference>
<dbReference type="RefSeq" id="YP_428696.1">
    <property type="nucleotide sequence ID" value="NC_007643.1"/>
</dbReference>
<dbReference type="SMR" id="Q2RN86"/>
<dbReference type="STRING" id="269796.Rru_A3615"/>
<dbReference type="EnsemblBacteria" id="ABC24409">
    <property type="protein sequence ID" value="ABC24409"/>
    <property type="gene ID" value="Rru_A3615"/>
</dbReference>
<dbReference type="KEGG" id="rru:Rru_A3615"/>
<dbReference type="PATRIC" id="fig|269796.9.peg.3736"/>
<dbReference type="eggNOG" id="COG1806">
    <property type="taxonomic scope" value="Bacteria"/>
</dbReference>
<dbReference type="HOGENOM" id="CLU_046206_2_0_5"/>
<dbReference type="PhylomeDB" id="Q2RN86"/>
<dbReference type="Proteomes" id="UP000001929">
    <property type="component" value="Chromosome"/>
</dbReference>
<dbReference type="GO" id="GO:0043531">
    <property type="term" value="F:ADP binding"/>
    <property type="evidence" value="ECO:0007669"/>
    <property type="project" value="UniProtKB-UniRule"/>
</dbReference>
<dbReference type="GO" id="GO:0005524">
    <property type="term" value="F:ATP binding"/>
    <property type="evidence" value="ECO:0007669"/>
    <property type="project" value="InterPro"/>
</dbReference>
<dbReference type="GO" id="GO:0016776">
    <property type="term" value="F:phosphotransferase activity, phosphate group as acceptor"/>
    <property type="evidence" value="ECO:0007669"/>
    <property type="project" value="UniProtKB-UniRule"/>
</dbReference>
<dbReference type="GO" id="GO:0004674">
    <property type="term" value="F:protein serine/threonine kinase activity"/>
    <property type="evidence" value="ECO:0007669"/>
    <property type="project" value="UniProtKB-UniRule"/>
</dbReference>
<dbReference type="HAMAP" id="MF_00921">
    <property type="entry name" value="PDRP"/>
    <property type="match status" value="1"/>
</dbReference>
<dbReference type="InterPro" id="IPR005177">
    <property type="entry name" value="Kinase-pyrophosphorylase"/>
</dbReference>
<dbReference type="InterPro" id="IPR026565">
    <property type="entry name" value="PPDK_reg"/>
</dbReference>
<dbReference type="NCBIfam" id="NF003742">
    <property type="entry name" value="PRK05339.1"/>
    <property type="match status" value="1"/>
</dbReference>
<dbReference type="PANTHER" id="PTHR31756">
    <property type="entry name" value="PYRUVATE, PHOSPHATE DIKINASE REGULATORY PROTEIN 1, CHLOROPLASTIC"/>
    <property type="match status" value="1"/>
</dbReference>
<dbReference type="PANTHER" id="PTHR31756:SF3">
    <property type="entry name" value="PYRUVATE, PHOSPHATE DIKINASE REGULATORY PROTEIN 1, CHLOROPLASTIC"/>
    <property type="match status" value="1"/>
</dbReference>
<dbReference type="Pfam" id="PF03618">
    <property type="entry name" value="Kinase-PPPase"/>
    <property type="match status" value="1"/>
</dbReference>
<protein>
    <recommendedName>
        <fullName evidence="1">Putative pyruvate, phosphate dikinase regulatory protein</fullName>
        <shortName evidence="1">PPDK regulatory protein</shortName>
        <ecNumber evidence="1">2.7.11.32</ecNumber>
        <ecNumber evidence="1">2.7.4.27</ecNumber>
    </recommendedName>
</protein>